<dbReference type="EMBL" id="BC105472">
    <property type="protein sequence ID" value="AAI05473.1"/>
    <property type="molecule type" value="mRNA"/>
</dbReference>
<dbReference type="RefSeq" id="NP_001039666.1">
    <property type="nucleotide sequence ID" value="NM_001046201.2"/>
</dbReference>
<dbReference type="SMR" id="Q2HJF3"/>
<dbReference type="FunCoup" id="Q2HJF3">
    <property type="interactions" value="1308"/>
</dbReference>
<dbReference type="STRING" id="9913.ENSBTAP00000002438"/>
<dbReference type="PaxDb" id="9913-ENSBTAP00000002438"/>
<dbReference type="Ensembl" id="ENSBTAT00000002438.4">
    <property type="protein sequence ID" value="ENSBTAP00000002438.3"/>
    <property type="gene ID" value="ENSBTAG00000001872.6"/>
</dbReference>
<dbReference type="GeneID" id="515476"/>
<dbReference type="KEGG" id="bta:515476"/>
<dbReference type="CTD" id="23594"/>
<dbReference type="VEuPathDB" id="HostDB:ENSBTAG00000001872"/>
<dbReference type="VGNC" id="VGNC:32451">
    <property type="gene designation" value="ORC6"/>
</dbReference>
<dbReference type="eggNOG" id="KOG4557">
    <property type="taxonomic scope" value="Eukaryota"/>
</dbReference>
<dbReference type="GeneTree" id="ENSGT00390000007370"/>
<dbReference type="HOGENOM" id="CLU_067825_1_0_1"/>
<dbReference type="InParanoid" id="Q2HJF3"/>
<dbReference type="OMA" id="RKSHYLN"/>
<dbReference type="OrthoDB" id="5552484at2759"/>
<dbReference type="TreeFam" id="TF101096"/>
<dbReference type="Reactome" id="R-BTA-176187">
    <property type="pathway name" value="Activation of ATR in response to replication stress"/>
</dbReference>
<dbReference type="Reactome" id="R-BTA-68616">
    <property type="pathway name" value="Assembly of the ORC complex at the origin of replication"/>
</dbReference>
<dbReference type="Reactome" id="R-BTA-68689">
    <property type="pathway name" value="CDC6 association with the ORC:origin complex"/>
</dbReference>
<dbReference type="Reactome" id="R-BTA-68949">
    <property type="pathway name" value="Orc1 removal from chromatin"/>
</dbReference>
<dbReference type="Reactome" id="R-BTA-68962">
    <property type="pathway name" value="Activation of the pre-replicative complex"/>
</dbReference>
<dbReference type="Proteomes" id="UP000009136">
    <property type="component" value="Chromosome 18"/>
</dbReference>
<dbReference type="Bgee" id="ENSBTAG00000001872">
    <property type="expression patterns" value="Expressed in oocyte and 105 other cell types or tissues"/>
</dbReference>
<dbReference type="GO" id="GO:0005664">
    <property type="term" value="C:nuclear origin of replication recognition complex"/>
    <property type="evidence" value="ECO:0000318"/>
    <property type="project" value="GO_Central"/>
</dbReference>
<dbReference type="GO" id="GO:0003677">
    <property type="term" value="F:DNA binding"/>
    <property type="evidence" value="ECO:0007669"/>
    <property type="project" value="UniProtKB-KW"/>
</dbReference>
<dbReference type="GO" id="GO:0006270">
    <property type="term" value="P:DNA replication initiation"/>
    <property type="evidence" value="ECO:0000318"/>
    <property type="project" value="GO_Central"/>
</dbReference>
<dbReference type="CDD" id="cd16075">
    <property type="entry name" value="ORC6_CTD"/>
    <property type="match status" value="1"/>
</dbReference>
<dbReference type="CDD" id="cd11583">
    <property type="entry name" value="Orc6_mid"/>
    <property type="match status" value="1"/>
</dbReference>
<dbReference type="FunFam" id="1.10.472.10:FF:000054">
    <property type="entry name" value="origin recognition complex subunit 6"/>
    <property type="match status" value="1"/>
</dbReference>
<dbReference type="Gene3D" id="1.10.472.10">
    <property type="entry name" value="Cyclin-like"/>
    <property type="match status" value="1"/>
</dbReference>
<dbReference type="InterPro" id="IPR054113">
    <property type="entry name" value="ORC6_cyclin-like_2nd"/>
</dbReference>
<dbReference type="InterPro" id="IPR008721">
    <property type="entry name" value="ORC6_cyclin_first"/>
</dbReference>
<dbReference type="InterPro" id="IPR020529">
    <property type="entry name" value="ORC6_met/pln"/>
</dbReference>
<dbReference type="PANTHER" id="PTHR13394">
    <property type="entry name" value="ORIGIN RECOGNITION COMPLEX SUBUNIT 6"/>
    <property type="match status" value="1"/>
</dbReference>
<dbReference type="PANTHER" id="PTHR13394:SF0">
    <property type="entry name" value="ORIGIN RECOGNITION COMPLEX SUBUNIT 6"/>
    <property type="match status" value="1"/>
</dbReference>
<dbReference type="Pfam" id="PF05460">
    <property type="entry name" value="ORC6"/>
    <property type="match status" value="1"/>
</dbReference>
<dbReference type="Pfam" id="PF21913">
    <property type="entry name" value="ORC6_2nd"/>
    <property type="match status" value="1"/>
</dbReference>
<sequence length="252" mass="28080">MESGLIRRLAPRLGIAEQEVLRKAEEYLRLSRVKCVGLSARTTETSNAVMCLDLAASCMKCPLDRAYLIKLSGLNKKMYQSCLKSFECLLGLNSNIGIRDLAVQFSCTEAVNLASKILQSYESSLPQTQQVDLDLSRPLFTTAALLSACKILKLKVDRNKMAATSGVKKAIFDRLCKQLEKIGQQIDREAGDSVTPPQKKKKTVIEPSAKEIENVVETLPKPQKDEDLTQDYEEWKRNILENAARAQKAATQ</sequence>
<proteinExistence type="evidence at transcript level"/>
<feature type="chain" id="PRO_0000245346" description="Origin recognition complex subunit 6">
    <location>
        <begin position="1"/>
        <end position="252"/>
    </location>
</feature>
<feature type="modified residue" description="Phosphothreonine" evidence="2">
    <location>
        <position position="195"/>
    </location>
</feature>
<feature type="modified residue" description="Phosphothreonine" evidence="2">
    <location>
        <position position="229"/>
    </location>
</feature>
<feature type="cross-link" description="Glycyl lysine isopeptide (Lys-Gly) (interchain with G-Cter in SUMO2)" evidence="2">
    <location>
        <position position="210"/>
    </location>
</feature>
<protein>
    <recommendedName>
        <fullName>Origin recognition complex subunit 6</fullName>
    </recommendedName>
</protein>
<organism>
    <name type="scientific">Bos taurus</name>
    <name type="common">Bovine</name>
    <dbReference type="NCBI Taxonomy" id="9913"/>
    <lineage>
        <taxon>Eukaryota</taxon>
        <taxon>Metazoa</taxon>
        <taxon>Chordata</taxon>
        <taxon>Craniata</taxon>
        <taxon>Vertebrata</taxon>
        <taxon>Euteleostomi</taxon>
        <taxon>Mammalia</taxon>
        <taxon>Eutheria</taxon>
        <taxon>Laurasiatheria</taxon>
        <taxon>Artiodactyla</taxon>
        <taxon>Ruminantia</taxon>
        <taxon>Pecora</taxon>
        <taxon>Bovidae</taxon>
        <taxon>Bovinae</taxon>
        <taxon>Bos</taxon>
    </lineage>
</organism>
<keyword id="KW-0235">DNA replication</keyword>
<keyword id="KW-0238">DNA-binding</keyword>
<keyword id="KW-1017">Isopeptide bond</keyword>
<keyword id="KW-0539">Nucleus</keyword>
<keyword id="KW-0597">Phosphoprotein</keyword>
<keyword id="KW-1185">Reference proteome</keyword>
<keyword id="KW-0832">Ubl conjugation</keyword>
<evidence type="ECO:0000250" key="1"/>
<evidence type="ECO:0000250" key="2">
    <source>
        <dbReference type="UniProtKB" id="Q9Y5N6"/>
    </source>
</evidence>
<evidence type="ECO:0000305" key="3"/>
<accession>Q2HJF3</accession>
<name>ORC6_BOVIN</name>
<comment type="function">
    <text evidence="1">Component of the origin recognition complex (ORC) that binds origins of replication. DNA-binding is ATP-dependent. The specific DNA sequences that define origins of replication have not been identified yet. ORC is required to assemble the pre-replication complex necessary to initiate DNA replication (By similarity).</text>
</comment>
<comment type="subunit">
    <text evidence="1">Component of ORC, a complex composed of at least 6 subunits: ORC1, ORC2, ORC3, ORC4, ORC5 and ORC6. ORC is regulated in a cell-cycle dependent manner. It is sequentially assembled at the exit from anaphase of mitosis and disassembled as cells enter S phase (By similarity). Interacts with DBF4 (By similarity).</text>
</comment>
<comment type="subcellular location">
    <subcellularLocation>
        <location evidence="1">Nucleus</location>
    </subcellularLocation>
</comment>
<comment type="similarity">
    <text evidence="3">Belongs to the ORC6 family.</text>
</comment>
<reference key="1">
    <citation type="submission" date="2005-09" db="EMBL/GenBank/DDBJ databases">
        <authorList>
            <consortium name="NIH - Mammalian Gene Collection (MGC) project"/>
        </authorList>
    </citation>
    <scope>NUCLEOTIDE SEQUENCE [LARGE SCALE MRNA]</scope>
    <source>
        <strain>Hereford</strain>
        <tissue>Thymus</tissue>
    </source>
</reference>
<gene>
    <name type="primary">ORC6</name>
    <name type="synonym">ORC6L</name>
</gene>